<comment type="function">
    <text evidence="1">eIF-2 functions in the early steps of protein synthesis by forming a ternary complex with GTP and initiator tRNA.</text>
</comment>
<comment type="subunit">
    <text evidence="1">Heterotrimer composed of an alpha, a beta and a gamma chain.</text>
</comment>
<comment type="similarity">
    <text evidence="1">Belongs to the eIF-2-beta/eIF-5 family.</text>
</comment>
<dbReference type="EMBL" id="CP000743">
    <property type="protein sequence ID" value="ABR57077.1"/>
    <property type="molecule type" value="Genomic_DNA"/>
</dbReference>
<dbReference type="RefSeq" id="WP_011974209.1">
    <property type="nucleotide sequence ID" value="NC_009635.1"/>
</dbReference>
<dbReference type="SMR" id="A6UX55"/>
<dbReference type="STRING" id="419665.Maeo_1501"/>
<dbReference type="GeneID" id="5327541"/>
<dbReference type="KEGG" id="mae:Maeo_1501"/>
<dbReference type="eggNOG" id="arCOG01640">
    <property type="taxonomic scope" value="Archaea"/>
</dbReference>
<dbReference type="HOGENOM" id="CLU_026663_3_1_2"/>
<dbReference type="OrthoDB" id="38099at2157"/>
<dbReference type="Proteomes" id="UP000001106">
    <property type="component" value="Chromosome"/>
</dbReference>
<dbReference type="GO" id="GO:0003743">
    <property type="term" value="F:translation initiation factor activity"/>
    <property type="evidence" value="ECO:0007669"/>
    <property type="project" value="UniProtKB-UniRule"/>
</dbReference>
<dbReference type="Gene3D" id="3.30.30.170">
    <property type="match status" value="1"/>
</dbReference>
<dbReference type="HAMAP" id="MF_00232">
    <property type="entry name" value="eIF_2_beta"/>
    <property type="match status" value="1"/>
</dbReference>
<dbReference type="InterPro" id="IPR045196">
    <property type="entry name" value="IF2/IF5"/>
</dbReference>
<dbReference type="InterPro" id="IPR004458">
    <property type="entry name" value="TIF2_bsu_arc"/>
</dbReference>
<dbReference type="InterPro" id="IPR002735">
    <property type="entry name" value="Transl_init_fac_IF2/IF5_dom"/>
</dbReference>
<dbReference type="InterPro" id="IPR016189">
    <property type="entry name" value="Transl_init_fac_IF2/IF5_N"/>
</dbReference>
<dbReference type="InterPro" id="IPR016190">
    <property type="entry name" value="Transl_init_fac_IF2/IF5_Zn-bd"/>
</dbReference>
<dbReference type="NCBIfam" id="TIGR00311">
    <property type="entry name" value="aIF-2beta"/>
    <property type="match status" value="1"/>
</dbReference>
<dbReference type="NCBIfam" id="NF003067">
    <property type="entry name" value="PRK03988.1"/>
    <property type="match status" value="1"/>
</dbReference>
<dbReference type="PANTHER" id="PTHR23001">
    <property type="entry name" value="EUKARYOTIC TRANSLATION INITIATION FACTOR"/>
    <property type="match status" value="1"/>
</dbReference>
<dbReference type="PANTHER" id="PTHR23001:SF3">
    <property type="entry name" value="EUKARYOTIC TRANSLATION INITIATION FACTOR 2 SUBUNIT 2"/>
    <property type="match status" value="1"/>
</dbReference>
<dbReference type="Pfam" id="PF01873">
    <property type="entry name" value="eIF-5_eIF-2B"/>
    <property type="match status" value="1"/>
</dbReference>
<dbReference type="SMART" id="SM00653">
    <property type="entry name" value="eIF2B_5"/>
    <property type="match status" value="1"/>
</dbReference>
<dbReference type="SUPFAM" id="SSF100966">
    <property type="entry name" value="Translation initiation factor 2 beta, aIF2beta, N-terminal domain"/>
    <property type="match status" value="1"/>
</dbReference>
<dbReference type="SUPFAM" id="SSF75689">
    <property type="entry name" value="Zinc-binding domain of translation initiation factor 2 beta"/>
    <property type="match status" value="1"/>
</dbReference>
<reference key="1">
    <citation type="submission" date="2007-06" db="EMBL/GenBank/DDBJ databases">
        <title>Complete sequence of Methanococcus aeolicus Nankai-3.</title>
        <authorList>
            <consortium name="US DOE Joint Genome Institute"/>
            <person name="Copeland A."/>
            <person name="Lucas S."/>
            <person name="Lapidus A."/>
            <person name="Barry K."/>
            <person name="Glavina del Rio T."/>
            <person name="Dalin E."/>
            <person name="Tice H."/>
            <person name="Pitluck S."/>
            <person name="Chain P."/>
            <person name="Malfatti S."/>
            <person name="Shin M."/>
            <person name="Vergez L."/>
            <person name="Schmutz J."/>
            <person name="Larimer F."/>
            <person name="Land M."/>
            <person name="Hauser L."/>
            <person name="Kyrpides N."/>
            <person name="Lykidis A."/>
            <person name="Sieprawska-Lupa M."/>
            <person name="Whitman W.B."/>
            <person name="Richardson P."/>
        </authorList>
    </citation>
    <scope>NUCLEOTIDE SEQUENCE [LARGE SCALE GENOMIC DNA]</scope>
    <source>
        <strain>ATCC BAA-1280 / DSM 17508 / OCM 812 / Nankai-3</strain>
    </source>
</reference>
<protein>
    <recommendedName>
        <fullName evidence="1">Translation initiation factor 2 subunit beta</fullName>
    </recommendedName>
    <alternativeName>
        <fullName evidence="1">aIF2-beta</fullName>
    </alternativeName>
    <alternativeName>
        <fullName evidence="1">eIF-2-beta</fullName>
    </alternativeName>
</protein>
<sequence>MNSDYYDYDALLKRAVSQLPEEVFKDVRFEVPHADSFVEGNRTMVKNFVDISKVIRREPQFFAKYVLKELGTAGDVEGPRLILQGKFGNYIINSKIKKFVDEYVLCPECGKPDTKIIKEGRIHFLKCMACGAMKPIKLI</sequence>
<gene>
    <name evidence="1" type="primary">eif2b</name>
    <name type="ordered locus">Maeo_1501</name>
</gene>
<proteinExistence type="inferred from homology"/>
<organism>
    <name type="scientific">Methanococcus aeolicus (strain ATCC BAA-1280 / DSM 17508 / OCM 812 / Nankai-3)</name>
    <dbReference type="NCBI Taxonomy" id="419665"/>
    <lineage>
        <taxon>Archaea</taxon>
        <taxon>Methanobacteriati</taxon>
        <taxon>Methanobacteriota</taxon>
        <taxon>Methanomada group</taxon>
        <taxon>Methanococci</taxon>
        <taxon>Methanococcales</taxon>
        <taxon>Methanococcaceae</taxon>
        <taxon>Methanococcus</taxon>
    </lineage>
</organism>
<name>IF2B_META3</name>
<evidence type="ECO:0000255" key="1">
    <source>
        <dbReference type="HAMAP-Rule" id="MF_00232"/>
    </source>
</evidence>
<keyword id="KW-0396">Initiation factor</keyword>
<keyword id="KW-0648">Protein biosynthesis</keyword>
<accession>A6UX55</accession>
<feature type="chain" id="PRO_0000336757" description="Translation initiation factor 2 subunit beta">
    <location>
        <begin position="1"/>
        <end position="139"/>
    </location>
</feature>